<dbReference type="EMBL" id="AM774415">
    <property type="protein sequence ID" value="CAP14238.1"/>
    <property type="molecule type" value="Genomic_DNA"/>
</dbReference>
<dbReference type="RefSeq" id="WP_010903247.1">
    <property type="nucleotide sequence ID" value="NC_010364.1"/>
</dbReference>
<dbReference type="SMR" id="B0R669"/>
<dbReference type="EnsemblBacteria" id="CAP14238">
    <property type="protein sequence ID" value="CAP14238"/>
    <property type="gene ID" value="OE_3407F"/>
</dbReference>
<dbReference type="KEGG" id="hsl:OE_3407F"/>
<dbReference type="HOGENOM" id="CLU_061015_3_0_2"/>
<dbReference type="PhylomeDB" id="B0R669"/>
<dbReference type="Proteomes" id="UP000001321">
    <property type="component" value="Chromosome"/>
</dbReference>
<dbReference type="GO" id="GO:1990904">
    <property type="term" value="C:ribonucleoprotein complex"/>
    <property type="evidence" value="ECO:0007669"/>
    <property type="project" value="UniProtKB-KW"/>
</dbReference>
<dbReference type="GO" id="GO:0005840">
    <property type="term" value="C:ribosome"/>
    <property type="evidence" value="ECO:0007669"/>
    <property type="project" value="UniProtKB-KW"/>
</dbReference>
<dbReference type="GO" id="GO:0019843">
    <property type="term" value="F:rRNA binding"/>
    <property type="evidence" value="ECO:0007669"/>
    <property type="project" value="UniProtKB-UniRule"/>
</dbReference>
<dbReference type="GO" id="GO:0003735">
    <property type="term" value="F:structural constituent of ribosome"/>
    <property type="evidence" value="ECO:0007669"/>
    <property type="project" value="InterPro"/>
</dbReference>
<dbReference type="GO" id="GO:0000049">
    <property type="term" value="F:tRNA binding"/>
    <property type="evidence" value="ECO:0007669"/>
    <property type="project" value="UniProtKB-UniRule"/>
</dbReference>
<dbReference type="GO" id="GO:0006412">
    <property type="term" value="P:translation"/>
    <property type="evidence" value="ECO:0007669"/>
    <property type="project" value="UniProtKB-UniRule"/>
</dbReference>
<dbReference type="FunFam" id="3.30.1440.10:FF:000002">
    <property type="entry name" value="60S ribosomal protein L11"/>
    <property type="match status" value="1"/>
</dbReference>
<dbReference type="Gene3D" id="3.30.1440.10">
    <property type="match status" value="1"/>
</dbReference>
<dbReference type="HAMAP" id="MF_01333_A">
    <property type="entry name" value="Ribosomal_uL5_A"/>
    <property type="match status" value="1"/>
</dbReference>
<dbReference type="InterPro" id="IPR002132">
    <property type="entry name" value="Ribosomal_uL5"/>
</dbReference>
<dbReference type="InterPro" id="IPR022804">
    <property type="entry name" value="Ribosomal_uL5_arc"/>
</dbReference>
<dbReference type="InterPro" id="IPR031309">
    <property type="entry name" value="Ribosomal_uL5_C"/>
</dbReference>
<dbReference type="InterPro" id="IPR022803">
    <property type="entry name" value="Ribosomal_uL5_dom_sf"/>
</dbReference>
<dbReference type="InterPro" id="IPR031310">
    <property type="entry name" value="Ribosomal_uL5_N"/>
</dbReference>
<dbReference type="NCBIfam" id="NF003258">
    <property type="entry name" value="PRK04219.1"/>
    <property type="match status" value="1"/>
</dbReference>
<dbReference type="PANTHER" id="PTHR11994">
    <property type="entry name" value="60S RIBOSOMAL PROTEIN L11-RELATED"/>
    <property type="match status" value="1"/>
</dbReference>
<dbReference type="Pfam" id="PF00281">
    <property type="entry name" value="Ribosomal_L5"/>
    <property type="match status" value="1"/>
</dbReference>
<dbReference type="Pfam" id="PF00673">
    <property type="entry name" value="Ribosomal_L5_C"/>
    <property type="match status" value="1"/>
</dbReference>
<dbReference type="PIRSF" id="PIRSF002161">
    <property type="entry name" value="Ribosomal_L5"/>
    <property type="match status" value="1"/>
</dbReference>
<dbReference type="SUPFAM" id="SSF55282">
    <property type="entry name" value="RL5-like"/>
    <property type="match status" value="1"/>
</dbReference>
<sequence length="175" mass="19507">MSETDSTDFHEMREPRIEKVVVHMGVGQGGVELQNAETILEAITGQQTVRTKAKSPEPEFGLRQGDPIGAKVTLRDDTAVDFLERALPAADLDRRQFDNTGNVSFGIEEHTDFPSQEYDPNIGIYGMDVTVNLTRPGYRVAKRDQGTRQIPSNHRLNSEDAVSFLVSNFDVEVNE</sequence>
<accession>B0R669</accession>
<organism>
    <name type="scientific">Halobacterium salinarum (strain ATCC 29341 / DSM 671 / R1)</name>
    <dbReference type="NCBI Taxonomy" id="478009"/>
    <lineage>
        <taxon>Archaea</taxon>
        <taxon>Methanobacteriati</taxon>
        <taxon>Methanobacteriota</taxon>
        <taxon>Stenosarchaea group</taxon>
        <taxon>Halobacteria</taxon>
        <taxon>Halobacteriales</taxon>
        <taxon>Halobacteriaceae</taxon>
        <taxon>Halobacterium</taxon>
        <taxon>Halobacterium salinarum NRC-34001</taxon>
    </lineage>
</organism>
<feature type="chain" id="PRO_1000142407" description="Large ribosomal subunit protein uL5">
    <location>
        <begin position="1"/>
        <end position="175"/>
    </location>
</feature>
<comment type="function">
    <text evidence="1">This is one of the proteins that bind and probably mediate the attachment of the 5S RNA into the large ribosomal subunit, where it forms part of the central protuberance. In the 70S ribosome it contacts protein S13 of the 30S subunit (bridge B1b), connecting the 2 subunits; this bridge is implicated in subunit movement. May contact the P site tRNA; the 5S rRNA and some of its associated proteins might help stabilize positioning of ribosome-bound tRNAs.</text>
</comment>
<comment type="subunit">
    <text evidence="1">Part of the 50S ribosomal subunit; contacts the 5S rRNA and probably tRNA. Forms a bridge to the 30S subunit in the 70S ribosome.</text>
</comment>
<comment type="similarity">
    <text evidence="1">Belongs to the universal ribosomal protein uL5 family.</text>
</comment>
<keyword id="KW-0687">Ribonucleoprotein</keyword>
<keyword id="KW-0689">Ribosomal protein</keyword>
<keyword id="KW-0694">RNA-binding</keyword>
<keyword id="KW-0699">rRNA-binding</keyword>
<keyword id="KW-0820">tRNA-binding</keyword>
<gene>
    <name evidence="1" type="primary">rpl5</name>
    <name type="ordered locus">OE_3407F</name>
</gene>
<protein>
    <recommendedName>
        <fullName evidence="1">Large ribosomal subunit protein uL5</fullName>
    </recommendedName>
    <alternativeName>
        <fullName evidence="2">50S ribosomal protein L5</fullName>
    </alternativeName>
</protein>
<evidence type="ECO:0000255" key="1">
    <source>
        <dbReference type="HAMAP-Rule" id="MF_01333"/>
    </source>
</evidence>
<evidence type="ECO:0000305" key="2"/>
<proteinExistence type="inferred from homology"/>
<name>RL5_HALS3</name>
<reference key="1">
    <citation type="journal article" date="2008" name="Genomics">
        <title>Evolution in the laboratory: the genome of Halobacterium salinarum strain R1 compared to that of strain NRC-1.</title>
        <authorList>
            <person name="Pfeiffer F."/>
            <person name="Schuster S.C."/>
            <person name="Broicher A."/>
            <person name="Falb M."/>
            <person name="Palm P."/>
            <person name="Rodewald K."/>
            <person name="Ruepp A."/>
            <person name="Soppa J."/>
            <person name="Tittor J."/>
            <person name="Oesterhelt D."/>
        </authorList>
    </citation>
    <scope>NUCLEOTIDE SEQUENCE [LARGE SCALE GENOMIC DNA]</scope>
    <source>
        <strain>ATCC 29341 / DSM 671 / R1</strain>
    </source>
</reference>